<evidence type="ECO:0000255" key="1">
    <source>
        <dbReference type="HAMAP-Rule" id="MF_00163"/>
    </source>
</evidence>
<gene>
    <name evidence="1" type="primary">def1</name>
    <name type="ordered locus">VVA1334</name>
</gene>
<sequence>MAVLEILTAPDPRLRVQSKEVTDVAAVQTLIDDLLETLYETDNGVGLAAPQVGREEAIVVIDLSENRDEPLVLVNPKVVSGSNKEMGQEGCLSVPDYYADVERYTSVVVEALDRNGKELRIETSEFLAIVMQHEIDHLSGNLFIDYLSPLKQQMAMKKVKKHNKLRAR</sequence>
<organism>
    <name type="scientific">Vibrio vulnificus (strain YJ016)</name>
    <dbReference type="NCBI Taxonomy" id="196600"/>
    <lineage>
        <taxon>Bacteria</taxon>
        <taxon>Pseudomonadati</taxon>
        <taxon>Pseudomonadota</taxon>
        <taxon>Gammaproteobacteria</taxon>
        <taxon>Vibrionales</taxon>
        <taxon>Vibrionaceae</taxon>
        <taxon>Vibrio</taxon>
    </lineage>
</organism>
<comment type="function">
    <text evidence="1">Removes the formyl group from the N-terminal Met of newly synthesized proteins. Requires at least a dipeptide for an efficient rate of reaction. N-terminal L-methionine is a prerequisite for activity but the enzyme has broad specificity at other positions.</text>
</comment>
<comment type="catalytic activity">
    <reaction evidence="1">
        <text>N-terminal N-formyl-L-methionyl-[peptide] + H2O = N-terminal L-methionyl-[peptide] + formate</text>
        <dbReference type="Rhea" id="RHEA:24420"/>
        <dbReference type="Rhea" id="RHEA-COMP:10639"/>
        <dbReference type="Rhea" id="RHEA-COMP:10640"/>
        <dbReference type="ChEBI" id="CHEBI:15377"/>
        <dbReference type="ChEBI" id="CHEBI:15740"/>
        <dbReference type="ChEBI" id="CHEBI:49298"/>
        <dbReference type="ChEBI" id="CHEBI:64731"/>
        <dbReference type="EC" id="3.5.1.88"/>
    </reaction>
</comment>
<comment type="cofactor">
    <cofactor evidence="1">
        <name>Fe(2+)</name>
        <dbReference type="ChEBI" id="CHEBI:29033"/>
    </cofactor>
    <text evidence="1">Binds 1 Fe(2+) ion.</text>
</comment>
<comment type="similarity">
    <text evidence="1">Belongs to the polypeptide deformylase family.</text>
</comment>
<keyword id="KW-0378">Hydrolase</keyword>
<keyword id="KW-0408">Iron</keyword>
<keyword id="KW-0479">Metal-binding</keyword>
<keyword id="KW-0648">Protein biosynthesis</keyword>
<feature type="chain" id="PRO_0000082879" description="Peptide deformylase 1">
    <location>
        <begin position="1"/>
        <end position="168"/>
    </location>
</feature>
<feature type="active site" evidence="1">
    <location>
        <position position="134"/>
    </location>
</feature>
<feature type="binding site" evidence="1">
    <location>
        <position position="91"/>
    </location>
    <ligand>
        <name>Fe cation</name>
        <dbReference type="ChEBI" id="CHEBI:24875"/>
    </ligand>
</feature>
<feature type="binding site" evidence="1">
    <location>
        <position position="133"/>
    </location>
    <ligand>
        <name>Fe cation</name>
        <dbReference type="ChEBI" id="CHEBI:24875"/>
    </ligand>
</feature>
<feature type="binding site" evidence="1">
    <location>
        <position position="137"/>
    </location>
    <ligand>
        <name>Fe cation</name>
        <dbReference type="ChEBI" id="CHEBI:24875"/>
    </ligand>
</feature>
<name>DEF1_VIBVY</name>
<proteinExistence type="inferred from homology"/>
<dbReference type="EC" id="3.5.1.88" evidence="1"/>
<dbReference type="EMBL" id="BA000038">
    <property type="protein sequence ID" value="BAC97360.1"/>
    <property type="molecule type" value="Genomic_DNA"/>
</dbReference>
<dbReference type="RefSeq" id="WP_011152567.1">
    <property type="nucleotide sequence ID" value="NC_005140.1"/>
</dbReference>
<dbReference type="SMR" id="Q7MCQ2"/>
<dbReference type="STRING" id="672.VV93_v1c42470"/>
<dbReference type="KEGG" id="vvy:VVA1334"/>
<dbReference type="PATRIC" id="fig|196600.6.peg.4481"/>
<dbReference type="eggNOG" id="COG0242">
    <property type="taxonomic scope" value="Bacteria"/>
</dbReference>
<dbReference type="HOGENOM" id="CLU_061901_2_1_6"/>
<dbReference type="Proteomes" id="UP000002675">
    <property type="component" value="Chromosome II"/>
</dbReference>
<dbReference type="GO" id="GO:0046872">
    <property type="term" value="F:metal ion binding"/>
    <property type="evidence" value="ECO:0007669"/>
    <property type="project" value="UniProtKB-KW"/>
</dbReference>
<dbReference type="GO" id="GO:0042586">
    <property type="term" value="F:peptide deformylase activity"/>
    <property type="evidence" value="ECO:0007669"/>
    <property type="project" value="UniProtKB-UniRule"/>
</dbReference>
<dbReference type="GO" id="GO:0043686">
    <property type="term" value="P:co-translational protein modification"/>
    <property type="evidence" value="ECO:0007669"/>
    <property type="project" value="TreeGrafter"/>
</dbReference>
<dbReference type="GO" id="GO:0006412">
    <property type="term" value="P:translation"/>
    <property type="evidence" value="ECO:0007669"/>
    <property type="project" value="UniProtKB-UniRule"/>
</dbReference>
<dbReference type="CDD" id="cd00487">
    <property type="entry name" value="Pep_deformylase"/>
    <property type="match status" value="1"/>
</dbReference>
<dbReference type="FunFam" id="3.90.45.10:FF:000001">
    <property type="entry name" value="Peptide deformylase"/>
    <property type="match status" value="1"/>
</dbReference>
<dbReference type="Gene3D" id="3.90.45.10">
    <property type="entry name" value="Peptide deformylase"/>
    <property type="match status" value="1"/>
</dbReference>
<dbReference type="HAMAP" id="MF_00163">
    <property type="entry name" value="Pep_deformylase"/>
    <property type="match status" value="1"/>
</dbReference>
<dbReference type="InterPro" id="IPR023635">
    <property type="entry name" value="Peptide_deformylase"/>
</dbReference>
<dbReference type="InterPro" id="IPR036821">
    <property type="entry name" value="Peptide_deformylase_sf"/>
</dbReference>
<dbReference type="NCBIfam" id="TIGR00079">
    <property type="entry name" value="pept_deformyl"/>
    <property type="match status" value="1"/>
</dbReference>
<dbReference type="NCBIfam" id="NF001159">
    <property type="entry name" value="PRK00150.1-3"/>
    <property type="match status" value="1"/>
</dbReference>
<dbReference type="PANTHER" id="PTHR10458">
    <property type="entry name" value="PEPTIDE DEFORMYLASE"/>
    <property type="match status" value="1"/>
</dbReference>
<dbReference type="PANTHER" id="PTHR10458:SF22">
    <property type="entry name" value="PEPTIDE DEFORMYLASE"/>
    <property type="match status" value="1"/>
</dbReference>
<dbReference type="Pfam" id="PF01327">
    <property type="entry name" value="Pep_deformylase"/>
    <property type="match status" value="1"/>
</dbReference>
<dbReference type="PIRSF" id="PIRSF004749">
    <property type="entry name" value="Pep_def"/>
    <property type="match status" value="1"/>
</dbReference>
<dbReference type="PRINTS" id="PR01576">
    <property type="entry name" value="PDEFORMYLASE"/>
</dbReference>
<dbReference type="SUPFAM" id="SSF56420">
    <property type="entry name" value="Peptide deformylase"/>
    <property type="match status" value="1"/>
</dbReference>
<protein>
    <recommendedName>
        <fullName evidence="1">Peptide deformylase 1</fullName>
        <shortName evidence="1">PDF 1</shortName>
        <ecNumber evidence="1">3.5.1.88</ecNumber>
    </recommendedName>
    <alternativeName>
        <fullName evidence="1">Polypeptide deformylase 1</fullName>
    </alternativeName>
</protein>
<reference key="1">
    <citation type="journal article" date="2003" name="Genome Res.">
        <title>Comparative genome analysis of Vibrio vulnificus, a marine pathogen.</title>
        <authorList>
            <person name="Chen C.-Y."/>
            <person name="Wu K.-M."/>
            <person name="Chang Y.-C."/>
            <person name="Chang C.-H."/>
            <person name="Tsai H.-C."/>
            <person name="Liao T.-L."/>
            <person name="Liu Y.-M."/>
            <person name="Chen H.-J."/>
            <person name="Shen A.B.-T."/>
            <person name="Li J.-C."/>
            <person name="Su T.-L."/>
            <person name="Shao C.-P."/>
            <person name="Lee C.-T."/>
            <person name="Hor L.-I."/>
            <person name="Tsai S.-F."/>
        </authorList>
    </citation>
    <scope>NUCLEOTIDE SEQUENCE [LARGE SCALE GENOMIC DNA]</scope>
    <source>
        <strain>YJ016</strain>
    </source>
</reference>
<accession>Q7MCQ2</accession>